<gene>
    <name type="primary">ereA</name>
</gene>
<accession>P07684</accession>
<accession>Q84FW7</accession>
<name>EREA_ECOLX</name>
<feature type="chain" id="PRO_0000087010" description="Erythromycin esterase type I">
    <location>
        <begin position="1"/>
        <end position="406"/>
    </location>
</feature>
<sequence>MTWRTTRTLLQPQKLDFNEFEILTSVIEGARIVGIGEGAHFVAEFSLARASLIRYLVERHEFNAIGLECGAIQASRLSEWLNSTAGAHELERFSDTLTFSVYGSVLIWLKSYLRESGRKLQLVGIDLPNTLNPRDDLAQLAEIIQLIDHLMKPHVDMLTHLLASIDGQSAVISSAKWGELETARQEKAISGVTRLKLRLASLAPVLKKHVNSDLFRKASDRIESIEYTLETLRIMKTFFDGTSLEGDTSVRDSYMAGVVDGMVRANPDVKIILLAHNNHLQKTPVSFSGELTAVPMGQHLAERVNYRAIAFTHLGPTVPEMHFPSPKSPLGFSVVTTPADAIREDSMEQYVIDACGTENSCLTLTDAPMEAKRMRSQSASVETKLSEAFDAIVCVTSAGKDSLVAL</sequence>
<reference key="1">
    <citation type="journal article" date="1985" name="Gene">
        <title>Nucleotide sequence of the gene ereA encoding the erythromycin esterase in Escherichia coli.</title>
        <authorList>
            <person name="Ounissi H."/>
            <person name="Courvalin P."/>
        </authorList>
    </citation>
    <scope>NUCLEOTIDE SEQUENCE [GENOMIC DNA]</scope>
    <source>
        <strain>BM2195</strain>
    </source>
</reference>
<reference key="2">
    <citation type="journal article" date="2003" name="Antimicrob. Agents Chemother.">
        <title>Erythromycin esterase gene ere(A) is located in a functional gene cassette in an unusual class 2 integron.</title>
        <authorList>
            <person name="Biskri L."/>
            <person name="Mazel D."/>
        </authorList>
    </citation>
    <scope>SEQUENCE REVISION TO N-TERMINUS</scope>
    <source>
        <strain>BM2195</strain>
    </source>
</reference>
<organism>
    <name type="scientific">Escherichia coli</name>
    <dbReference type="NCBI Taxonomy" id="562"/>
    <lineage>
        <taxon>Bacteria</taxon>
        <taxon>Pseudomonadati</taxon>
        <taxon>Pseudomonadota</taxon>
        <taxon>Gammaproteobacteria</taxon>
        <taxon>Enterobacterales</taxon>
        <taxon>Enterobacteriaceae</taxon>
        <taxon>Escherichia</taxon>
    </lineage>
</organism>
<dbReference type="EC" id="3.1.1.-"/>
<dbReference type="EMBL" id="AY183453">
    <property type="protein sequence ID" value="AAO38247.1"/>
    <property type="molecule type" value="Genomic_DNA"/>
</dbReference>
<dbReference type="PIR" id="A24027">
    <property type="entry name" value="A24027"/>
</dbReference>
<dbReference type="SMR" id="P07684"/>
<dbReference type="CARD" id="ARO:3000361">
    <property type="molecule name" value="EreA"/>
    <property type="mechanism identifier" value="ARO:0001004"/>
    <property type="mechanism name" value="antibiotic inactivation"/>
</dbReference>
<dbReference type="KEGG" id="ag:AAO38247"/>
<dbReference type="GO" id="GO:0052689">
    <property type="term" value="F:carboxylic ester hydrolase activity"/>
    <property type="evidence" value="ECO:0007669"/>
    <property type="project" value="UniProtKB-KW"/>
</dbReference>
<dbReference type="GO" id="GO:0046677">
    <property type="term" value="P:response to antibiotic"/>
    <property type="evidence" value="ECO:0007669"/>
    <property type="project" value="UniProtKB-KW"/>
</dbReference>
<dbReference type="CDD" id="cd14728">
    <property type="entry name" value="Ere-like"/>
    <property type="match status" value="1"/>
</dbReference>
<dbReference type="Gene3D" id="1.20.1440.30">
    <property type="entry name" value="Biosynthetic Protein domain"/>
    <property type="match status" value="1"/>
</dbReference>
<dbReference type="Gene3D" id="3.40.1660.10">
    <property type="entry name" value="EreA-like (biosynthetic domain)"/>
    <property type="match status" value="1"/>
</dbReference>
<dbReference type="Gene3D" id="3.30.1870.10">
    <property type="entry name" value="EreA-like, domain 2"/>
    <property type="match status" value="1"/>
</dbReference>
<dbReference type="InterPro" id="IPR007815">
    <property type="entry name" value="Emycin_Estase"/>
</dbReference>
<dbReference type="InterPro" id="IPR016273">
    <property type="entry name" value="Emycin_Estase_proteobac"/>
</dbReference>
<dbReference type="InterPro" id="IPR052036">
    <property type="entry name" value="Hydrolase/PRTase-associated"/>
</dbReference>
<dbReference type="NCBIfam" id="NF000208">
    <property type="entry name" value="EreA"/>
    <property type="match status" value="1"/>
</dbReference>
<dbReference type="PANTHER" id="PTHR31299">
    <property type="entry name" value="ESTERASE, PUTATIVE (AFU_ORTHOLOGUE AFUA_1G05850)-RELATED"/>
    <property type="match status" value="1"/>
</dbReference>
<dbReference type="PANTHER" id="PTHR31299:SF0">
    <property type="entry name" value="ESTERASE, PUTATIVE (AFU_ORTHOLOGUE AFUA_1G05850)-RELATED"/>
    <property type="match status" value="1"/>
</dbReference>
<dbReference type="Pfam" id="PF05139">
    <property type="entry name" value="Erythro_esteras"/>
    <property type="match status" value="1"/>
</dbReference>
<dbReference type="PIRSF" id="PIRSF000880">
    <property type="entry name" value="Eryth_est"/>
    <property type="match status" value="1"/>
</dbReference>
<dbReference type="SUPFAM" id="SSF159501">
    <property type="entry name" value="EreA/ChaN-like"/>
    <property type="match status" value="1"/>
</dbReference>
<comment type="function">
    <text>This enzyme confers resistance to erythromycin through inactivation by hydrolyzing the lactone ring of the antibiotic.</text>
</comment>
<comment type="miscellaneous">
    <text>Erythromycin esterase type I and type II share no significant homology except for the region from AA 270 to 300.</text>
</comment>
<protein>
    <recommendedName>
        <fullName>Erythromycin esterase type I</fullName>
        <ecNumber>3.1.1.-</ecNumber>
    </recommendedName>
</protein>
<geneLocation type="plasmid">
    <name>pIP1100</name>
</geneLocation>
<keyword id="KW-0046">Antibiotic resistance</keyword>
<keyword id="KW-0378">Hydrolase</keyword>
<keyword id="KW-0614">Plasmid</keyword>
<keyword id="KW-0719">Serine esterase</keyword>
<proteinExistence type="predicted"/>